<evidence type="ECO:0000250" key="1"/>
<evidence type="ECO:0000250" key="2">
    <source>
        <dbReference type="UniProtKB" id="P70665"/>
    </source>
</evidence>
<evidence type="ECO:0000255" key="3"/>
<evidence type="ECO:0000269" key="4">
    <source>
    </source>
</evidence>
<evidence type="ECO:0000305" key="5"/>
<evidence type="ECO:0000305" key="6">
    <source>
    </source>
</evidence>
<sequence>MVSPRPVGLMLLLIIARVSRGAGIGFRFASYIDNYMVLQKEPSGAVIWGFGTAGATVTVTLCQGQETIMKKVTSVKGPSNTWMVVLDPMKPGGPFEVMAQQTLETTNLTLRVHDVLFGDVWLCSGQSNMQMTVLQIFNASKELSDTAAYQSVRIFSVSLTQAEEELADLDGVDLSWSKPTAGNLGHGNFTYMSAVCWLFGRYLYDTLQYPIGLVSSSWGGTPIEVWSSRRALKACGVPNTRDERVLQPEIKPMRNGCESKESSCPFRRFVPCDPVAGPATHSVLWNAMIHPLQNMTLKGVVWYQGENNANYNRDLYACMFPALIAGWRQTFHSGCQGQTERFFPFGFVQLSSYLLMNSSDYGFPEIRWHQTADFGSVPNPKMPNTFMAVAMDLCDRDSPFGSIHPRDKQTVAYRLHLGARAVAYGEKNLTFQGPLPKKIELLARNELLNLTYDQEIQVQRKDNKTFEISCCSDHQCKWLPAPVNTFSTQTLILDLSACLGTVDAVRYAWTTWPCEYKQCAVYHTSSVLPAPPFTARITHRGI</sequence>
<comment type="function">
    <text evidence="2 6">Catalyzes the removal of O-acetyl ester groups from position 9 of the free diacetylated sialate N-acetyl-9-O-acetylneuraminate (Neu5,9Ac2) in the cytosol and of the diacetylated sialate residues of sialylglycoconjugates in the lysosomes (Probable). Together with the sialate-O-acetyltransferase they regulate the balance of acetylated sialoglycoconjugates, key players in various processes such as cell-cell interactions, host-pathogen recognition, and tumor antigenicity (By similarity).</text>
</comment>
<comment type="catalytic activity">
    <reaction evidence="6">
        <text>N-acetyl-9-O-acetylneuraminate + H2O = N-acetylneuraminate + acetate + H(+)</text>
        <dbReference type="Rhea" id="RHEA:22600"/>
        <dbReference type="ChEBI" id="CHEBI:15377"/>
        <dbReference type="ChEBI" id="CHEBI:15378"/>
        <dbReference type="ChEBI" id="CHEBI:28999"/>
        <dbReference type="ChEBI" id="CHEBI:30089"/>
        <dbReference type="ChEBI" id="CHEBI:35418"/>
        <dbReference type="EC" id="3.1.1.53"/>
    </reaction>
    <physiologicalReaction direction="left-to-right" evidence="6">
        <dbReference type="Rhea" id="RHEA:22601"/>
    </physiologicalReaction>
</comment>
<comment type="catalytic activity">
    <reaction evidence="4">
        <text>an Ac-O-9-sialoglycoconjugate + H2O = a sialoglycoconjugate + acetate + H(+)</text>
        <dbReference type="Rhea" id="RHEA:80763"/>
        <dbReference type="ChEBI" id="CHEBI:15377"/>
        <dbReference type="ChEBI" id="CHEBI:15378"/>
        <dbReference type="ChEBI" id="CHEBI:30089"/>
        <dbReference type="ChEBI" id="CHEBI:231691"/>
        <dbReference type="ChEBI" id="CHEBI:231692"/>
    </reaction>
    <physiologicalReaction direction="left-to-right" evidence="6">
        <dbReference type="Rhea" id="RHEA:80764"/>
    </physiologicalReaction>
</comment>
<comment type="activity regulation">
    <text>Inhibited by diisopropyl fluorophosphate and diethyl-P-nitrophenyl phosphate.</text>
</comment>
<comment type="subunit">
    <text>Disulfide-linked heterodimer of a small subunit and a large subunit.</text>
</comment>
<comment type="subcellular location">
    <subcellularLocation>
        <location>Lysosome</location>
    </subcellularLocation>
</comment>
<comment type="tissue specificity">
    <text>Widely expressed.</text>
</comment>
<comment type="PTM">
    <text>The two subunits are derived from a single precursor by proteolytic cleavage.</text>
</comment>
<comment type="PTM">
    <text>Glycosylated.</text>
</comment>
<protein>
    <recommendedName>
        <fullName>Sialate O-acetylesterase</fullName>
        <shortName>SIAE</shortName>
        <ecNumber evidence="6">3.1.1.53</ecNumber>
    </recommendedName>
    <alternativeName>
        <fullName>Sialic acid-specific 9-O-acetylesterase</fullName>
    </alternativeName>
    <alternativeName>
        <fullName>Yolk sac protein 2</fullName>
    </alternativeName>
    <component>
        <recommendedName>
            <fullName>Sialate O-acetylesterase small subunit</fullName>
        </recommendedName>
    </component>
    <component>
        <recommendedName>
            <fullName>Sialate O-acetylesterase large subunit</fullName>
        </recommendedName>
    </component>
</protein>
<accession>P82450</accession>
<organism>
    <name type="scientific">Rattus norvegicus</name>
    <name type="common">Rat</name>
    <dbReference type="NCBI Taxonomy" id="10116"/>
    <lineage>
        <taxon>Eukaryota</taxon>
        <taxon>Metazoa</taxon>
        <taxon>Chordata</taxon>
        <taxon>Craniata</taxon>
        <taxon>Vertebrata</taxon>
        <taxon>Euteleostomi</taxon>
        <taxon>Mammalia</taxon>
        <taxon>Eutheria</taxon>
        <taxon>Euarchontoglires</taxon>
        <taxon>Glires</taxon>
        <taxon>Rodentia</taxon>
        <taxon>Myomorpha</taxon>
        <taxon>Muroidea</taxon>
        <taxon>Muridae</taxon>
        <taxon>Murinae</taxon>
        <taxon>Rattus</taxon>
    </lineage>
</organism>
<proteinExistence type="evidence at protein level"/>
<reference key="1">
    <citation type="journal article" date="2004" name="Nature">
        <title>Genome sequence of the Brown Norway rat yields insights into mammalian evolution.</title>
        <authorList>
            <person name="Gibbs R.A."/>
            <person name="Weinstock G.M."/>
            <person name="Metzker M.L."/>
            <person name="Muzny D.M."/>
            <person name="Sodergren E.J."/>
            <person name="Scherer S."/>
            <person name="Scott G."/>
            <person name="Steffen D."/>
            <person name="Worley K.C."/>
            <person name="Burch P.E."/>
            <person name="Okwuonu G."/>
            <person name="Hines S."/>
            <person name="Lewis L."/>
            <person name="Deramo C."/>
            <person name="Delgado O."/>
            <person name="Dugan-Rocha S."/>
            <person name="Miner G."/>
            <person name="Morgan M."/>
            <person name="Hawes A."/>
            <person name="Gill R."/>
            <person name="Holt R.A."/>
            <person name="Adams M.D."/>
            <person name="Amanatides P.G."/>
            <person name="Baden-Tillson H."/>
            <person name="Barnstead M."/>
            <person name="Chin S."/>
            <person name="Evans C.A."/>
            <person name="Ferriera S."/>
            <person name="Fosler C."/>
            <person name="Glodek A."/>
            <person name="Gu Z."/>
            <person name="Jennings D."/>
            <person name="Kraft C.L."/>
            <person name="Nguyen T."/>
            <person name="Pfannkoch C.M."/>
            <person name="Sitter C."/>
            <person name="Sutton G.G."/>
            <person name="Venter J.C."/>
            <person name="Woodage T."/>
            <person name="Smith D."/>
            <person name="Lee H.-M."/>
            <person name="Gustafson E."/>
            <person name="Cahill P."/>
            <person name="Kana A."/>
            <person name="Doucette-Stamm L."/>
            <person name="Weinstock K."/>
            <person name="Fechtel K."/>
            <person name="Weiss R.B."/>
            <person name="Dunn D.M."/>
            <person name="Green E.D."/>
            <person name="Blakesley R.W."/>
            <person name="Bouffard G.G."/>
            <person name="De Jong P.J."/>
            <person name="Osoegawa K."/>
            <person name="Zhu B."/>
            <person name="Marra M."/>
            <person name="Schein J."/>
            <person name="Bosdet I."/>
            <person name="Fjell C."/>
            <person name="Jones S."/>
            <person name="Krzywinski M."/>
            <person name="Mathewson C."/>
            <person name="Siddiqui A."/>
            <person name="Wye N."/>
            <person name="McPherson J."/>
            <person name="Zhao S."/>
            <person name="Fraser C.M."/>
            <person name="Shetty J."/>
            <person name="Shatsman S."/>
            <person name="Geer K."/>
            <person name="Chen Y."/>
            <person name="Abramzon S."/>
            <person name="Nierman W.C."/>
            <person name="Havlak P.H."/>
            <person name="Chen R."/>
            <person name="Durbin K.J."/>
            <person name="Egan A."/>
            <person name="Ren Y."/>
            <person name="Song X.-Z."/>
            <person name="Li B."/>
            <person name="Liu Y."/>
            <person name="Qin X."/>
            <person name="Cawley S."/>
            <person name="Cooney A.J."/>
            <person name="D'Souza L.M."/>
            <person name="Martin K."/>
            <person name="Wu J.Q."/>
            <person name="Gonzalez-Garay M.L."/>
            <person name="Jackson A.R."/>
            <person name="Kalafus K.J."/>
            <person name="McLeod M.P."/>
            <person name="Milosavljevic A."/>
            <person name="Virk D."/>
            <person name="Volkov A."/>
            <person name="Wheeler D.A."/>
            <person name="Zhang Z."/>
            <person name="Bailey J.A."/>
            <person name="Eichler E.E."/>
            <person name="Tuzun E."/>
            <person name="Birney E."/>
            <person name="Mongin E."/>
            <person name="Ureta-Vidal A."/>
            <person name="Woodwark C."/>
            <person name="Zdobnov E."/>
            <person name="Bork P."/>
            <person name="Suyama M."/>
            <person name="Torrents D."/>
            <person name="Alexandersson M."/>
            <person name="Trask B.J."/>
            <person name="Young J.M."/>
            <person name="Huang H."/>
            <person name="Wang H."/>
            <person name="Xing H."/>
            <person name="Daniels S."/>
            <person name="Gietzen D."/>
            <person name="Schmidt J."/>
            <person name="Stevens K."/>
            <person name="Vitt U."/>
            <person name="Wingrove J."/>
            <person name="Camara F."/>
            <person name="Mar Alba M."/>
            <person name="Abril J.F."/>
            <person name="Guigo R."/>
            <person name="Smit A."/>
            <person name="Dubchak I."/>
            <person name="Rubin E.M."/>
            <person name="Couronne O."/>
            <person name="Poliakov A."/>
            <person name="Huebner N."/>
            <person name="Ganten D."/>
            <person name="Goesele C."/>
            <person name="Hummel O."/>
            <person name="Kreitler T."/>
            <person name="Lee Y.-A."/>
            <person name="Monti J."/>
            <person name="Schulz H."/>
            <person name="Zimdahl H."/>
            <person name="Himmelbauer H."/>
            <person name="Lehrach H."/>
            <person name="Jacob H.J."/>
            <person name="Bromberg S."/>
            <person name="Gullings-Handley J."/>
            <person name="Jensen-Seaman M.I."/>
            <person name="Kwitek A.E."/>
            <person name="Lazar J."/>
            <person name="Pasko D."/>
            <person name="Tonellato P.J."/>
            <person name="Twigger S."/>
            <person name="Ponting C.P."/>
            <person name="Duarte J.M."/>
            <person name="Rice S."/>
            <person name="Goodstadt L."/>
            <person name="Beatson S.A."/>
            <person name="Emes R.D."/>
            <person name="Winter E.E."/>
            <person name="Webber C."/>
            <person name="Brandt P."/>
            <person name="Nyakatura G."/>
            <person name="Adetobi M."/>
            <person name="Chiaromonte F."/>
            <person name="Elnitski L."/>
            <person name="Eswara P."/>
            <person name="Hardison R.C."/>
            <person name="Hou M."/>
            <person name="Kolbe D."/>
            <person name="Makova K."/>
            <person name="Miller W."/>
            <person name="Nekrutenko A."/>
            <person name="Riemer C."/>
            <person name="Schwartz S."/>
            <person name="Taylor J."/>
            <person name="Yang S."/>
            <person name="Zhang Y."/>
            <person name="Lindpaintner K."/>
            <person name="Andrews T.D."/>
            <person name="Caccamo M."/>
            <person name="Clamp M."/>
            <person name="Clarke L."/>
            <person name="Curwen V."/>
            <person name="Durbin R.M."/>
            <person name="Eyras E."/>
            <person name="Searle S.M."/>
            <person name="Cooper G.M."/>
            <person name="Batzoglou S."/>
            <person name="Brudno M."/>
            <person name="Sidow A."/>
            <person name="Stone E.A."/>
            <person name="Payseur B.A."/>
            <person name="Bourque G."/>
            <person name="Lopez-Otin C."/>
            <person name="Puente X.S."/>
            <person name="Chakrabarti K."/>
            <person name="Chatterji S."/>
            <person name="Dewey C."/>
            <person name="Pachter L."/>
            <person name="Bray N."/>
            <person name="Yap V.B."/>
            <person name="Caspi A."/>
            <person name="Tesler G."/>
            <person name="Pevzner P.A."/>
            <person name="Haussler D."/>
            <person name="Roskin K.M."/>
            <person name="Baertsch R."/>
            <person name="Clawson H."/>
            <person name="Furey T.S."/>
            <person name="Hinrichs A.S."/>
            <person name="Karolchik D."/>
            <person name="Kent W.J."/>
            <person name="Rosenbloom K.R."/>
            <person name="Trumbower H."/>
            <person name="Weirauch M."/>
            <person name="Cooper D.N."/>
            <person name="Stenson P.D."/>
            <person name="Ma B."/>
            <person name="Brent M."/>
            <person name="Arumugam M."/>
            <person name="Shteynberg D."/>
            <person name="Copley R.R."/>
            <person name="Taylor M.S."/>
            <person name="Riethman H."/>
            <person name="Mudunuri U."/>
            <person name="Peterson J."/>
            <person name="Guyer M."/>
            <person name="Felsenfeld A."/>
            <person name="Old S."/>
            <person name="Mockrin S."/>
            <person name="Collins F.S."/>
        </authorList>
    </citation>
    <scope>NUCLEOTIDE SEQUENCE [LARGE SCALE GENOMIC DNA]</scope>
    <source>
        <strain>Brown Norway</strain>
    </source>
</reference>
<reference key="2">
    <citation type="journal article" date="1993" name="J. Biol. Chem.">
        <title>Structural, immunological, and biosynthetic studies of a sialic acid-specific O-acetylesterase from rat liver.</title>
        <authorList>
            <person name="Butor C."/>
            <person name="Higa H.H."/>
            <person name="Varki A."/>
        </authorList>
    </citation>
    <scope>PROTEIN SEQUENCE OF 24-50 AND 277-307</scope>
    <source>
        <tissue>Liver</tissue>
    </source>
</reference>
<reference key="3">
    <citation type="journal article" date="1989" name="J. Biol. Chem.">
        <title>O-acetylation and de-O-acetylation of sialic acids. Purification, characterization, and properties of a glycosylated rat liver esterase specific for 9-O-acetylated sialic acids.</title>
        <authorList>
            <person name="Higa H.H."/>
            <person name="Manzi A."/>
            <person name="Varki A."/>
        </authorList>
    </citation>
    <scope>CHARACTERIZATION</scope>
    <scope>FUNCTION</scope>
    <scope>CATALYTIC ACTIVITY</scope>
    <source>
        <tissue>Liver</tissue>
    </source>
</reference>
<feature type="signal peptide" evidence="1">
    <location>
        <begin position="1"/>
        <end position="23"/>
    </location>
</feature>
<feature type="chain" id="PRO_0000022716" description="Sialate O-acetylesterase small subunit" evidence="1">
    <location>
        <begin position="24"/>
        <end position="276"/>
    </location>
</feature>
<feature type="chain" id="PRO_0000022717" description="Sialate O-acetylesterase large subunit" evidence="1">
    <location>
        <begin position="277"/>
        <end position="542"/>
    </location>
</feature>
<feature type="glycosylation site" description="N-linked (GlcNAc...) asparagine" evidence="3">
    <location>
        <position position="107"/>
    </location>
</feature>
<feature type="glycosylation site" description="N-linked (GlcNAc...) asparagine" evidence="3">
    <location>
        <position position="138"/>
    </location>
</feature>
<feature type="glycosylation site" description="N-linked (GlcNAc...) asparagine" evidence="3">
    <location>
        <position position="188"/>
    </location>
</feature>
<feature type="glycosylation site" description="N-linked (GlcNAc...) asparagine" evidence="3">
    <location>
        <position position="294"/>
    </location>
</feature>
<feature type="glycosylation site" description="N-linked (GlcNAc...) asparagine" evidence="3">
    <location>
        <position position="357"/>
    </location>
</feature>
<feature type="glycosylation site" description="N-linked (GlcNAc...) asparagine" evidence="3">
    <location>
        <position position="428"/>
    </location>
</feature>
<feature type="glycosylation site" description="N-linked (GlcNAc...) asparagine" evidence="3">
    <location>
        <position position="449"/>
    </location>
</feature>
<feature type="glycosylation site" description="N-linked (GlcNAc...) asparagine" evidence="3">
    <location>
        <position position="463"/>
    </location>
</feature>
<feature type="sequence conflict" description="In Ref. 2; AA sequence." evidence="5" ref="2">
    <original>GFR</original>
    <variation>PFP</variation>
    <location>
        <begin position="25"/>
        <end position="27"/>
    </location>
</feature>
<feature type="sequence conflict" description="In Ref. 2; AA sequence." evidence="5" ref="2">
    <original>W</original>
    <variation>L</variation>
    <location>
        <position position="48"/>
    </location>
</feature>
<feature type="sequence conflict" description="In Ref. 2; AA sequence." evidence="5" ref="2">
    <original>F</original>
    <variation>L</variation>
    <location>
        <position position="50"/>
    </location>
</feature>
<feature type="sequence conflict" description="In Ref. 2; AA sequence." evidence="5" ref="2">
    <location>
        <position position="290"/>
    </location>
</feature>
<feature type="sequence conflict" description="In Ref. 2; AA sequence." evidence="5" ref="2">
    <original>NMT</original>
    <variation>TMR</variation>
    <location>
        <begin position="294"/>
        <end position="296"/>
    </location>
</feature>
<name>SIAE_RAT</name>
<dbReference type="EC" id="3.1.1.53" evidence="6"/>
<dbReference type="PIR" id="A46690">
    <property type="entry name" value="A46690"/>
</dbReference>
<dbReference type="PIR" id="B46690">
    <property type="entry name" value="B46690"/>
</dbReference>
<dbReference type="SMR" id="P82450"/>
<dbReference type="FunCoup" id="P82450">
    <property type="interactions" value="469"/>
</dbReference>
<dbReference type="STRING" id="10116.ENSRNOP00000042202"/>
<dbReference type="GlyCosmos" id="P82450">
    <property type="glycosylation" value="8 sites, No reported glycans"/>
</dbReference>
<dbReference type="GlyGen" id="P82450">
    <property type="glycosylation" value="8 sites"/>
</dbReference>
<dbReference type="PhosphoSitePlus" id="P82450"/>
<dbReference type="PaxDb" id="10116-ENSRNOP00000042202"/>
<dbReference type="UCSC" id="RGD:1310431">
    <property type="organism name" value="rat"/>
</dbReference>
<dbReference type="AGR" id="RGD:1310431"/>
<dbReference type="RGD" id="1310431">
    <property type="gene designation" value="Siae"/>
</dbReference>
<dbReference type="eggNOG" id="ENOG502QUKD">
    <property type="taxonomic scope" value="Eukaryota"/>
</dbReference>
<dbReference type="InParanoid" id="P82450"/>
<dbReference type="PhylomeDB" id="P82450"/>
<dbReference type="TreeFam" id="TF328611"/>
<dbReference type="PRO" id="PR:P82450"/>
<dbReference type="Proteomes" id="UP000002494">
    <property type="component" value="Unplaced"/>
</dbReference>
<dbReference type="GO" id="GO:0005764">
    <property type="term" value="C:lysosome"/>
    <property type="evidence" value="ECO:0000266"/>
    <property type="project" value="RGD"/>
</dbReference>
<dbReference type="GO" id="GO:0106330">
    <property type="term" value="F:sialate 9-O-acetylesterase activity"/>
    <property type="evidence" value="ECO:0007669"/>
    <property type="project" value="RHEA"/>
</dbReference>
<dbReference type="GO" id="GO:0001681">
    <property type="term" value="F:sialate O-acetylesterase activity"/>
    <property type="evidence" value="ECO:0000266"/>
    <property type="project" value="RGD"/>
</dbReference>
<dbReference type="GO" id="GO:0005975">
    <property type="term" value="P:carbohydrate metabolic process"/>
    <property type="evidence" value="ECO:0000266"/>
    <property type="project" value="RGD"/>
</dbReference>
<dbReference type="GO" id="GO:0002682">
    <property type="term" value="P:regulation of immune system process"/>
    <property type="evidence" value="ECO:0000266"/>
    <property type="project" value="RGD"/>
</dbReference>
<dbReference type="FunFam" id="3.40.50.1110:FF:000008">
    <property type="entry name" value="Sialate O-acetylesterase"/>
    <property type="match status" value="1"/>
</dbReference>
<dbReference type="Gene3D" id="3.40.50.1110">
    <property type="entry name" value="SGNH hydrolase"/>
    <property type="match status" value="1"/>
</dbReference>
<dbReference type="InterPro" id="IPR036514">
    <property type="entry name" value="SGNH_hydro_sf"/>
</dbReference>
<dbReference type="InterPro" id="IPR039329">
    <property type="entry name" value="SIAE"/>
</dbReference>
<dbReference type="PANTHER" id="PTHR22901">
    <property type="entry name" value="SIALATE O-ACETYLESTERASE"/>
    <property type="match status" value="1"/>
</dbReference>
<dbReference type="PANTHER" id="PTHR22901:SF0">
    <property type="entry name" value="SIALATE O-ACETYLESTERASE"/>
    <property type="match status" value="1"/>
</dbReference>
<dbReference type="SUPFAM" id="SSF52266">
    <property type="entry name" value="SGNH hydrolase"/>
    <property type="match status" value="1"/>
</dbReference>
<keyword id="KW-0903">Direct protein sequencing</keyword>
<keyword id="KW-1015">Disulfide bond</keyword>
<keyword id="KW-0325">Glycoprotein</keyword>
<keyword id="KW-0378">Hydrolase</keyword>
<keyword id="KW-0458">Lysosome</keyword>
<keyword id="KW-1185">Reference proteome</keyword>
<keyword id="KW-0719">Serine esterase</keyword>
<keyword id="KW-0732">Signal</keyword>
<gene>
    <name type="primary">Siae</name>
    <name type="synonym">Ysg2</name>
</gene>